<proteinExistence type="inferred from homology"/>
<name>RL19E_PYRHO</name>
<organism>
    <name type="scientific">Pyrococcus horikoshii (strain ATCC 700860 / DSM 12428 / JCM 9974 / NBRC 100139 / OT-3)</name>
    <dbReference type="NCBI Taxonomy" id="70601"/>
    <lineage>
        <taxon>Archaea</taxon>
        <taxon>Methanobacteriati</taxon>
        <taxon>Methanobacteriota</taxon>
        <taxon>Thermococci</taxon>
        <taxon>Thermococcales</taxon>
        <taxon>Thermococcaceae</taxon>
        <taxon>Pyrococcus</taxon>
    </lineage>
</organism>
<comment type="function">
    <text evidence="1">Binds to the 23S rRNA.</text>
</comment>
<comment type="subunit">
    <text evidence="1">Part of the 50S ribosomal subunit.</text>
</comment>
<comment type="similarity">
    <text evidence="1">Belongs to the eukaryotic ribosomal protein eL19 family.</text>
</comment>
<dbReference type="EMBL" id="BA000001">
    <property type="protein sequence ID" value="BAA30873.1"/>
    <property type="molecule type" value="Genomic_DNA"/>
</dbReference>
<dbReference type="PIR" id="B71185">
    <property type="entry name" value="B71185"/>
</dbReference>
<dbReference type="RefSeq" id="WP_010885823.1">
    <property type="nucleotide sequence ID" value="NC_000961.1"/>
</dbReference>
<dbReference type="SMR" id="O59437"/>
<dbReference type="STRING" id="70601.gene:9378756"/>
<dbReference type="EnsemblBacteria" id="BAA30873">
    <property type="protein sequence ID" value="BAA30873"/>
    <property type="gene ID" value="BAA30873"/>
</dbReference>
<dbReference type="GeneID" id="1442604"/>
<dbReference type="KEGG" id="pho:PH1759"/>
<dbReference type="eggNOG" id="arCOG04089">
    <property type="taxonomic scope" value="Archaea"/>
</dbReference>
<dbReference type="OrthoDB" id="11624at2157"/>
<dbReference type="Proteomes" id="UP000000752">
    <property type="component" value="Chromosome"/>
</dbReference>
<dbReference type="GO" id="GO:0022625">
    <property type="term" value="C:cytosolic large ribosomal subunit"/>
    <property type="evidence" value="ECO:0007669"/>
    <property type="project" value="InterPro"/>
</dbReference>
<dbReference type="GO" id="GO:0070180">
    <property type="term" value="F:large ribosomal subunit rRNA binding"/>
    <property type="evidence" value="ECO:0007669"/>
    <property type="project" value="UniProtKB-UniRule"/>
</dbReference>
<dbReference type="GO" id="GO:0003735">
    <property type="term" value="F:structural constituent of ribosome"/>
    <property type="evidence" value="ECO:0007669"/>
    <property type="project" value="InterPro"/>
</dbReference>
<dbReference type="GO" id="GO:0006412">
    <property type="term" value="P:translation"/>
    <property type="evidence" value="ECO:0007669"/>
    <property type="project" value="UniProtKB-UniRule"/>
</dbReference>
<dbReference type="CDD" id="cd00481">
    <property type="entry name" value="Ribosomal_L19e"/>
    <property type="match status" value="1"/>
</dbReference>
<dbReference type="FunFam" id="1.10.1200.240:FF:000003">
    <property type="entry name" value="50S ribosomal protein L19e"/>
    <property type="match status" value="1"/>
</dbReference>
<dbReference type="FunFam" id="1.10.1650.10:FF:000001">
    <property type="entry name" value="Ribosomal protein L19"/>
    <property type="match status" value="1"/>
</dbReference>
<dbReference type="Gene3D" id="1.10.1200.240">
    <property type="match status" value="1"/>
</dbReference>
<dbReference type="Gene3D" id="1.10.1650.10">
    <property type="match status" value="1"/>
</dbReference>
<dbReference type="HAMAP" id="MF_01475">
    <property type="entry name" value="Ribosomal_eL19"/>
    <property type="match status" value="1"/>
</dbReference>
<dbReference type="InterPro" id="IPR035970">
    <property type="entry name" value="60S_ribosomal_eL19_sf"/>
</dbReference>
<dbReference type="InterPro" id="IPR039547">
    <property type="entry name" value="Ribosomal_eL19"/>
</dbReference>
<dbReference type="InterPro" id="IPR023638">
    <property type="entry name" value="Ribosomal_eL19_CS"/>
</dbReference>
<dbReference type="InterPro" id="IPR000196">
    <property type="entry name" value="Ribosomal_eL19_dom"/>
</dbReference>
<dbReference type="InterPro" id="IPR015972">
    <property type="entry name" value="Ribosomal_eL19_dom1"/>
</dbReference>
<dbReference type="NCBIfam" id="NF006343">
    <property type="entry name" value="PRK08570.1"/>
    <property type="match status" value="1"/>
</dbReference>
<dbReference type="PANTHER" id="PTHR10722">
    <property type="entry name" value="60S RIBOSOMAL PROTEIN L19"/>
    <property type="match status" value="1"/>
</dbReference>
<dbReference type="Pfam" id="PF01280">
    <property type="entry name" value="Ribosomal_L19e"/>
    <property type="match status" value="1"/>
</dbReference>
<dbReference type="Pfam" id="PF25476">
    <property type="entry name" value="Ribosomal_L19e_C"/>
    <property type="match status" value="1"/>
</dbReference>
<dbReference type="SMART" id="SM01416">
    <property type="entry name" value="Ribosomal_L19e"/>
    <property type="match status" value="1"/>
</dbReference>
<dbReference type="SUPFAM" id="SSF48140">
    <property type="entry name" value="Ribosomal protein L19 (L19e)"/>
    <property type="match status" value="1"/>
</dbReference>
<dbReference type="PROSITE" id="PS00526">
    <property type="entry name" value="RIBOSOMAL_L19E"/>
    <property type="match status" value="1"/>
</dbReference>
<keyword id="KW-0687">Ribonucleoprotein</keyword>
<keyword id="KW-0689">Ribosomal protein</keyword>
<keyword id="KW-0694">RNA-binding</keyword>
<keyword id="KW-0699">rRNA-binding</keyword>
<accession>O59437</accession>
<evidence type="ECO:0000255" key="1">
    <source>
        <dbReference type="HAMAP-Rule" id="MF_01475"/>
    </source>
</evidence>
<evidence type="ECO:0000256" key="2">
    <source>
        <dbReference type="SAM" id="MobiDB-lite"/>
    </source>
</evidence>
<evidence type="ECO:0000305" key="3"/>
<protein>
    <recommendedName>
        <fullName evidence="1">Large ribosomal subunit protein eL19</fullName>
    </recommendedName>
    <alternativeName>
        <fullName evidence="3">50S ribosomal protein L19e</fullName>
    </alternativeName>
</protein>
<reference key="1">
    <citation type="journal article" date="1998" name="DNA Res.">
        <title>Complete sequence and gene organization of the genome of a hyper-thermophilic archaebacterium, Pyrococcus horikoshii OT3.</title>
        <authorList>
            <person name="Kawarabayasi Y."/>
            <person name="Sawada M."/>
            <person name="Horikawa H."/>
            <person name="Haikawa Y."/>
            <person name="Hino Y."/>
            <person name="Yamamoto S."/>
            <person name="Sekine M."/>
            <person name="Baba S."/>
            <person name="Kosugi H."/>
            <person name="Hosoyama A."/>
            <person name="Nagai Y."/>
            <person name="Sakai M."/>
            <person name="Ogura K."/>
            <person name="Otsuka R."/>
            <person name="Nakazawa H."/>
            <person name="Takamiya M."/>
            <person name="Ohfuku Y."/>
            <person name="Funahashi T."/>
            <person name="Tanaka T."/>
            <person name="Kudoh Y."/>
            <person name="Yamazaki J."/>
            <person name="Kushida N."/>
            <person name="Oguchi A."/>
            <person name="Aoki K."/>
            <person name="Yoshizawa T."/>
            <person name="Nakamura Y."/>
            <person name="Robb F.T."/>
            <person name="Horikoshi K."/>
            <person name="Masuchi Y."/>
            <person name="Shizuya H."/>
            <person name="Kikuchi H."/>
        </authorList>
    </citation>
    <scope>NUCLEOTIDE SEQUENCE [LARGE SCALE GENOMIC DNA]</scope>
    <source>
        <strain>ATCC 700860 / DSM 12428 / JCM 9974 / NBRC 100139 / OT-3</strain>
    </source>
</reference>
<feature type="chain" id="PRO_0000131194" description="Large ribosomal subunit protein eL19">
    <location>
        <begin position="1"/>
        <end position="150"/>
    </location>
</feature>
<feature type="region of interest" description="Disordered" evidence="2">
    <location>
        <begin position="59"/>
        <end position="89"/>
    </location>
</feature>
<feature type="compositionally biased region" description="Basic residues" evidence="2">
    <location>
        <begin position="61"/>
        <end position="89"/>
    </location>
</feature>
<gene>
    <name evidence="1" type="primary">rpl19e</name>
    <name type="ordered locus">PH1759</name>
</gene>
<sequence>MNTLKMQRRIAAELLKCGENRVWIDPEKVDEVASAITREDIRRLIKEGVIRKKPIEGQSRYRARIRHEQKKKGRHRGPGSRKGKKTARMGKKELWIKTIRALRRELRKLKEQKKIDRKTYRMLYIRAKGGQFKNKHQLYLFLEEHGLLKK</sequence>